<evidence type="ECO:0000250" key="1">
    <source>
        <dbReference type="UniProtKB" id="P35052"/>
    </source>
</evidence>
<evidence type="ECO:0000250" key="2">
    <source>
        <dbReference type="UniProtKB" id="P51654"/>
    </source>
</evidence>
<evidence type="ECO:0000250" key="3">
    <source>
        <dbReference type="UniProtKB" id="Q6V9Y8"/>
    </source>
</evidence>
<evidence type="ECO:0000250" key="4">
    <source>
        <dbReference type="UniProtKB" id="Q8CFZ4"/>
    </source>
</evidence>
<evidence type="ECO:0000255" key="5"/>
<evidence type="ECO:0000256" key="6">
    <source>
        <dbReference type="SAM" id="MobiDB-lite"/>
    </source>
</evidence>
<evidence type="ECO:0000269" key="7">
    <source>
    </source>
</evidence>
<evidence type="ECO:0000269" key="8">
    <source>
    </source>
</evidence>
<evidence type="ECO:0000269" key="9">
    <source>
    </source>
</evidence>
<evidence type="ECO:0000305" key="10"/>
<proteinExistence type="evidence at protein level"/>
<gene>
    <name type="primary">Gpc3</name>
</gene>
<keyword id="KW-1003">Cell membrane</keyword>
<keyword id="KW-1015">Disulfide bond</keyword>
<keyword id="KW-0325">Glycoprotein</keyword>
<keyword id="KW-0336">GPI-anchor</keyword>
<keyword id="KW-0357">Heparan sulfate</keyword>
<keyword id="KW-0449">Lipoprotein</keyword>
<keyword id="KW-0472">Membrane</keyword>
<keyword id="KW-0597">Phosphoprotein</keyword>
<keyword id="KW-0646">Protease inhibitor</keyword>
<keyword id="KW-0654">Proteoglycan</keyword>
<keyword id="KW-0873">Pyrrolidone carboxylic acid</keyword>
<keyword id="KW-1185">Reference proteome</keyword>
<keyword id="KW-0732">Signal</keyword>
<protein>
    <recommendedName>
        <fullName>Glypican-3</fullName>
    </recommendedName>
    <alternativeName>
        <fullName>Intestinal protein OCI-5</fullName>
    </alternativeName>
    <component>
        <recommendedName>
            <fullName evidence="2">Glypican-3 alpha subunit</fullName>
        </recommendedName>
    </component>
    <component>
        <recommendedName>
            <fullName evidence="2">Glypican-3 beta subunit</fullName>
        </recommendedName>
    </component>
</protein>
<organism>
    <name type="scientific">Rattus norvegicus</name>
    <name type="common">Rat</name>
    <dbReference type="NCBI Taxonomy" id="10116"/>
    <lineage>
        <taxon>Eukaryota</taxon>
        <taxon>Metazoa</taxon>
        <taxon>Chordata</taxon>
        <taxon>Craniata</taxon>
        <taxon>Vertebrata</taxon>
        <taxon>Euteleostomi</taxon>
        <taxon>Mammalia</taxon>
        <taxon>Eutheria</taxon>
        <taxon>Euarchontoglires</taxon>
        <taxon>Glires</taxon>
        <taxon>Rodentia</taxon>
        <taxon>Myomorpha</taxon>
        <taxon>Muroidea</taxon>
        <taxon>Muridae</taxon>
        <taxon>Murinae</taxon>
        <taxon>Rattus</taxon>
    </lineage>
</organism>
<dbReference type="EMBL" id="M22400">
    <property type="protein sequence ID" value="AAA41735.1"/>
    <property type="molecule type" value="mRNA"/>
</dbReference>
<dbReference type="EMBL" id="BC085756">
    <property type="protein sequence ID" value="AAH85756.1"/>
    <property type="molecule type" value="mRNA"/>
</dbReference>
<dbReference type="PIR" id="A30814">
    <property type="entry name" value="A30814"/>
</dbReference>
<dbReference type="RefSeq" id="NP_036906.1">
    <property type="nucleotide sequence ID" value="NM_012774.1"/>
</dbReference>
<dbReference type="SMR" id="P13265"/>
<dbReference type="BioGRID" id="247276">
    <property type="interactions" value="2"/>
</dbReference>
<dbReference type="FunCoup" id="P13265">
    <property type="interactions" value="146"/>
</dbReference>
<dbReference type="STRING" id="10116.ENSRNOP00000075712"/>
<dbReference type="GlyCosmos" id="P13265">
    <property type="glycosylation" value="5 sites, No reported glycans"/>
</dbReference>
<dbReference type="GlyGen" id="P13265">
    <property type="glycosylation" value="5 sites"/>
</dbReference>
<dbReference type="PhosphoSitePlus" id="P13265"/>
<dbReference type="PaxDb" id="10116-ENSRNOP00000043344"/>
<dbReference type="GeneID" id="25236"/>
<dbReference type="KEGG" id="rno:25236"/>
<dbReference type="UCSC" id="RGD:2725">
    <property type="organism name" value="rat"/>
</dbReference>
<dbReference type="AGR" id="RGD:2725"/>
<dbReference type="CTD" id="2719"/>
<dbReference type="RGD" id="2725">
    <property type="gene designation" value="Gpc3"/>
</dbReference>
<dbReference type="eggNOG" id="KOG3821">
    <property type="taxonomic scope" value="Eukaryota"/>
</dbReference>
<dbReference type="InParanoid" id="P13265"/>
<dbReference type="OrthoDB" id="6511150at2759"/>
<dbReference type="PhylomeDB" id="P13265"/>
<dbReference type="Reactome" id="R-RNO-1971475">
    <property type="pathway name" value="A tetrasaccharide linker sequence is required for GAG synthesis"/>
</dbReference>
<dbReference type="Reactome" id="R-RNO-2022928">
    <property type="pathway name" value="HS-GAG biosynthesis"/>
</dbReference>
<dbReference type="Reactome" id="R-RNO-2024096">
    <property type="pathway name" value="HS-GAG degradation"/>
</dbReference>
<dbReference type="Reactome" id="R-RNO-381426">
    <property type="pathway name" value="Regulation of Insulin-like Growth Factor (IGF) transport and uptake by Insulin-like Growth Factor Binding Proteins (IGFBPs)"/>
</dbReference>
<dbReference type="Reactome" id="R-RNO-8957275">
    <property type="pathway name" value="Post-translational protein phosphorylation"/>
</dbReference>
<dbReference type="Reactome" id="R-RNO-975634">
    <property type="pathway name" value="Retinoid metabolism and transport"/>
</dbReference>
<dbReference type="PRO" id="PR:P13265"/>
<dbReference type="Proteomes" id="UP000002494">
    <property type="component" value="Unplaced"/>
</dbReference>
<dbReference type="GO" id="GO:0009986">
    <property type="term" value="C:cell surface"/>
    <property type="evidence" value="ECO:0000318"/>
    <property type="project" value="GO_Central"/>
</dbReference>
<dbReference type="GO" id="GO:0005764">
    <property type="term" value="C:lysosome"/>
    <property type="evidence" value="ECO:0000266"/>
    <property type="project" value="RGD"/>
</dbReference>
<dbReference type="GO" id="GO:0005886">
    <property type="term" value="C:plasma membrane"/>
    <property type="evidence" value="ECO:0000314"/>
    <property type="project" value="UniProtKB"/>
</dbReference>
<dbReference type="GO" id="GO:0098552">
    <property type="term" value="C:side of membrane"/>
    <property type="evidence" value="ECO:0007669"/>
    <property type="project" value="UniProtKB-KW"/>
</dbReference>
<dbReference type="GO" id="GO:0060422">
    <property type="term" value="F:peptidyl-dipeptidase inhibitor activity"/>
    <property type="evidence" value="ECO:0000250"/>
    <property type="project" value="UniProtKB"/>
</dbReference>
<dbReference type="GO" id="GO:0009887">
    <property type="term" value="P:animal organ morphogenesis"/>
    <property type="evidence" value="ECO:0000266"/>
    <property type="project" value="RGD"/>
</dbReference>
<dbReference type="GO" id="GO:0009948">
    <property type="term" value="P:anterior/posterior axis specification"/>
    <property type="evidence" value="ECO:0000266"/>
    <property type="project" value="RGD"/>
</dbReference>
<dbReference type="GO" id="GO:0010171">
    <property type="term" value="P:body morphogenesis"/>
    <property type="evidence" value="ECO:0000266"/>
    <property type="project" value="RGD"/>
</dbReference>
<dbReference type="GO" id="GO:0030282">
    <property type="term" value="P:bone mineralization"/>
    <property type="evidence" value="ECO:0000266"/>
    <property type="project" value="RGD"/>
</dbReference>
<dbReference type="GO" id="GO:0001658">
    <property type="term" value="P:branching involved in ureteric bud morphogenesis"/>
    <property type="evidence" value="ECO:0000266"/>
    <property type="project" value="RGD"/>
</dbReference>
<dbReference type="GO" id="GO:0060070">
    <property type="term" value="P:canonical Wnt signaling pathway"/>
    <property type="evidence" value="ECO:0000266"/>
    <property type="project" value="RGD"/>
</dbReference>
<dbReference type="GO" id="GO:0016477">
    <property type="term" value="P:cell migration"/>
    <property type="evidence" value="ECO:0000318"/>
    <property type="project" value="GO_Central"/>
</dbReference>
<dbReference type="GO" id="GO:0042074">
    <property type="term" value="P:cell migration involved in gastrulation"/>
    <property type="evidence" value="ECO:0000250"/>
    <property type="project" value="UniProtKB"/>
</dbReference>
<dbReference type="GO" id="GO:0072111">
    <property type="term" value="P:cell proliferation involved in kidney development"/>
    <property type="evidence" value="ECO:0000250"/>
    <property type="project" value="UniProtKB"/>
</dbReference>
<dbReference type="GO" id="GO:0072203">
    <property type="term" value="P:cell proliferation involved in metanephros development"/>
    <property type="evidence" value="ECO:0000266"/>
    <property type="project" value="RGD"/>
</dbReference>
<dbReference type="GO" id="GO:0060976">
    <property type="term" value="P:coronary vasculature development"/>
    <property type="evidence" value="ECO:0000250"/>
    <property type="project" value="UniProtKB"/>
</dbReference>
<dbReference type="GO" id="GO:0035116">
    <property type="term" value="P:embryonic hindlimb morphogenesis"/>
    <property type="evidence" value="ECO:0000266"/>
    <property type="project" value="RGD"/>
</dbReference>
<dbReference type="GO" id="GO:0050673">
    <property type="term" value="P:epithelial cell proliferation"/>
    <property type="evidence" value="ECO:0000266"/>
    <property type="project" value="RGD"/>
</dbReference>
<dbReference type="GO" id="GO:0001822">
    <property type="term" value="P:kidney development"/>
    <property type="evidence" value="ECO:0000266"/>
    <property type="project" value="RGD"/>
</dbReference>
<dbReference type="GO" id="GO:0030324">
    <property type="term" value="P:lung development"/>
    <property type="evidence" value="ECO:0000266"/>
    <property type="project" value="RGD"/>
</dbReference>
<dbReference type="GO" id="GO:0072138">
    <property type="term" value="P:mesenchymal cell proliferation involved in ureteric bud development"/>
    <property type="evidence" value="ECO:0000266"/>
    <property type="project" value="RGD"/>
</dbReference>
<dbReference type="GO" id="GO:0072180">
    <property type="term" value="P:mesonephric duct morphogenesis"/>
    <property type="evidence" value="ECO:0000250"/>
    <property type="project" value="UniProtKB"/>
</dbReference>
<dbReference type="GO" id="GO:0090090">
    <property type="term" value="P:negative regulation of canonical Wnt signaling pathway"/>
    <property type="evidence" value="ECO:0000314"/>
    <property type="project" value="MGI"/>
</dbReference>
<dbReference type="GO" id="GO:0008285">
    <property type="term" value="P:negative regulation of cell population proliferation"/>
    <property type="evidence" value="ECO:0000266"/>
    <property type="project" value="RGD"/>
</dbReference>
<dbReference type="GO" id="GO:0050680">
    <property type="term" value="P:negative regulation of epithelial cell proliferation"/>
    <property type="evidence" value="ECO:0000266"/>
    <property type="project" value="RGD"/>
</dbReference>
<dbReference type="GO" id="GO:0045926">
    <property type="term" value="P:negative regulation of growth"/>
    <property type="evidence" value="ECO:0000266"/>
    <property type="project" value="RGD"/>
</dbReference>
<dbReference type="GO" id="GO:0045879">
    <property type="term" value="P:negative regulation of smoothened signaling pathway"/>
    <property type="evidence" value="ECO:0000250"/>
    <property type="project" value="UniProtKB"/>
</dbReference>
<dbReference type="GO" id="GO:0030316">
    <property type="term" value="P:osteoclast differentiation"/>
    <property type="evidence" value="ECO:0000266"/>
    <property type="project" value="RGD"/>
</dbReference>
<dbReference type="GO" id="GO:0030513">
    <property type="term" value="P:positive regulation of BMP signaling pathway"/>
    <property type="evidence" value="ECO:0000266"/>
    <property type="project" value="RGD"/>
</dbReference>
<dbReference type="GO" id="GO:0090263">
    <property type="term" value="P:positive regulation of canonical Wnt signaling pathway"/>
    <property type="evidence" value="ECO:0000250"/>
    <property type="project" value="UniProtKB"/>
</dbReference>
<dbReference type="GO" id="GO:0046326">
    <property type="term" value="P:positive regulation of D-glucose import"/>
    <property type="evidence" value="ECO:0000266"/>
    <property type="project" value="RGD"/>
</dbReference>
<dbReference type="GO" id="GO:0045807">
    <property type="term" value="P:positive regulation of endocytosis"/>
    <property type="evidence" value="ECO:0000250"/>
    <property type="project" value="UniProtKB"/>
</dbReference>
<dbReference type="GO" id="GO:0045732">
    <property type="term" value="P:positive regulation of protein catabolic process"/>
    <property type="evidence" value="ECO:0000250"/>
    <property type="project" value="UniProtKB"/>
</dbReference>
<dbReference type="GO" id="GO:0045880">
    <property type="term" value="P:positive regulation of smoothened signaling pathway"/>
    <property type="evidence" value="ECO:0000266"/>
    <property type="project" value="RGD"/>
</dbReference>
<dbReference type="GO" id="GO:2000096">
    <property type="term" value="P:positive regulation of Wnt signaling pathway, planar cell polarity pathway"/>
    <property type="evidence" value="ECO:0000314"/>
    <property type="project" value="MGI"/>
</dbReference>
<dbReference type="GO" id="GO:0060828">
    <property type="term" value="P:regulation of canonical Wnt signaling pathway"/>
    <property type="evidence" value="ECO:0000266"/>
    <property type="project" value="RGD"/>
</dbReference>
<dbReference type="GO" id="GO:0040008">
    <property type="term" value="P:regulation of growth"/>
    <property type="evidence" value="ECO:0000266"/>
    <property type="project" value="RGD"/>
</dbReference>
<dbReference type="GO" id="GO:2000050">
    <property type="term" value="P:regulation of non-canonical Wnt signaling pathway"/>
    <property type="evidence" value="ECO:0000266"/>
    <property type="project" value="RGD"/>
</dbReference>
<dbReference type="GO" id="GO:1905475">
    <property type="term" value="P:regulation of protein localization to membrane"/>
    <property type="evidence" value="ECO:0000318"/>
    <property type="project" value="GO_Central"/>
</dbReference>
<dbReference type="GO" id="GO:0009617">
    <property type="term" value="P:response to bacterium"/>
    <property type="evidence" value="ECO:0000266"/>
    <property type="project" value="RGD"/>
</dbReference>
<dbReference type="GO" id="GO:0007224">
    <property type="term" value="P:smoothened signaling pathway"/>
    <property type="evidence" value="ECO:0000266"/>
    <property type="project" value="RGD"/>
</dbReference>
<dbReference type="GO" id="GO:0060071">
    <property type="term" value="P:Wnt signaling pathway, planar cell polarity pathway"/>
    <property type="evidence" value="ECO:0000266"/>
    <property type="project" value="RGD"/>
</dbReference>
<dbReference type="InterPro" id="IPR001863">
    <property type="entry name" value="Glypican"/>
</dbReference>
<dbReference type="InterPro" id="IPR019803">
    <property type="entry name" value="Glypican_CS"/>
</dbReference>
<dbReference type="PANTHER" id="PTHR10822">
    <property type="entry name" value="GLYPICAN"/>
    <property type="match status" value="1"/>
</dbReference>
<dbReference type="PANTHER" id="PTHR10822:SF4">
    <property type="entry name" value="GLYPICAN-3"/>
    <property type="match status" value="1"/>
</dbReference>
<dbReference type="Pfam" id="PF01153">
    <property type="entry name" value="Glypican"/>
    <property type="match status" value="1"/>
</dbReference>
<dbReference type="PROSITE" id="PS01207">
    <property type="entry name" value="GLYPICAN"/>
    <property type="match status" value="1"/>
</dbReference>
<sequence>MAGTVRTACLLVAMLLGLGCLGQAQPPPPPDATCHQVRSFFQRLQPGLKWVPETPVPGSDLQVCLPKGPTCCSRKMEEKYQLTARLNMEQLLQSASMELKFLIIQNAAVFQEAFEIVVRHAKNYTNAMFKNNYPSLTPQAFEFVGEFFTDVSLYILGSDINVDDMVNELFDSLFPVIYTQMMNPGLPESVLDINECLRGARRDLKVFGSFPKLIMTQVSKSLQVTRIFLQALNLGIEVINTTDHLKFSKDCGRMLTRMWYCSYCQGLMMVKPCGGYCNVVMQGCMAGVVEIDKYWREYILSLEELVNGMYRIYDMENVLLGLFSTIHDSIQYVQKNGGKLTTTIGKLCAHSQQRQYRSAYYPEDLFIDKKVLKVARVEHEETLSSRRRELIQKLKSFISFYSALPGYICSHSPVAENDTLCWNGQELVERYSQKAARNGMKNQFNLHELKMKGPEPVVSQIIDKLKHINQLLRTMSVPKGKVVDKSLDEEGLESGDCGDDEDECIGSSGDGMMKVKNQLRFLAELAYDLDVDDAPGNKQHGNQKDNEITTSHSVGNMPSPLKILISVAIYVACFFSWCTDLPCPCLCCPAAPCGPPT</sequence>
<name>GPC3_RAT</name>
<feature type="signal peptide" evidence="5">
    <location>
        <begin position="1"/>
        <end position="24"/>
    </location>
</feature>
<feature type="chain" id="PRO_0000445416" description="Glypican-3 alpha subunit" evidence="2">
    <location>
        <begin position="25"/>
        <end position="357"/>
    </location>
</feature>
<feature type="chain" id="PRO_0000445417" description="Glypican-3 beta subunit" evidence="2">
    <location>
        <begin position="358"/>
        <end status="unknown"/>
    </location>
</feature>
<feature type="propeptide" id="PRO_0000012314" description="Removed in mature form" evidence="5">
    <location>
        <begin status="unknown"/>
        <end position="597"/>
    </location>
</feature>
<feature type="region of interest" description="Disordered" evidence="6">
    <location>
        <begin position="533"/>
        <end position="553"/>
    </location>
</feature>
<feature type="modified residue" description="Pyrrolidone carboxylic acid" evidence="2">
    <location>
        <position position="25"/>
    </location>
</feature>
<feature type="modified residue" description="Phosphoserine" evidence="2">
    <location>
        <position position="351"/>
    </location>
</feature>
<feature type="glycosylation site" description="N-linked (GlcNAc...) asparagine" evidence="5">
    <location>
        <position position="123"/>
    </location>
</feature>
<feature type="glycosylation site" description="N-linked (GlcNAc...) asparagine" evidence="5">
    <location>
        <position position="240"/>
    </location>
</feature>
<feature type="glycosylation site" description="N-linked (GlcNAc...) asparagine" evidence="5">
    <location>
        <position position="417"/>
    </location>
</feature>
<feature type="glycosylation site" description="O-linked (Xyl...) (glycosaminoglycan) serine" evidence="5">
    <location>
        <position position="494"/>
    </location>
</feature>
<feature type="glycosylation site" description="O-linked (Xyl...) (glycosaminoglycan) serine" evidence="5">
    <location>
        <position position="508"/>
    </location>
</feature>
<feature type="disulfide bond" evidence="1">
    <location>
        <begin position="34"/>
        <end position="71"/>
    </location>
</feature>
<feature type="disulfide bond" evidence="1">
    <location>
        <begin position="64"/>
        <end position="261"/>
    </location>
</feature>
<feature type="disulfide bond" evidence="1">
    <location>
        <begin position="72"/>
        <end position="264"/>
    </location>
</feature>
<feature type="disulfide bond" evidence="1">
    <location>
        <begin position="196"/>
        <end position="348"/>
    </location>
</feature>
<feature type="disulfide bond" evidence="1">
    <location>
        <begin position="251"/>
        <end position="284"/>
    </location>
</feature>
<feature type="disulfide bond" description="Interchain (between alpha and beta chains)" evidence="1">
    <location>
        <begin position="273"/>
        <end position="421"/>
    </location>
</feature>
<feature type="disulfide bond" description="Interchain (between alpha and beta chains)" evidence="1">
    <location>
        <begin position="277"/>
        <end position="409"/>
    </location>
</feature>
<feature type="sequence conflict" description="In Ref. 2; AAH85756." evidence="10" ref="2">
    <original>S</original>
    <variation>N</variation>
    <location>
        <position position="553"/>
    </location>
</feature>
<feature type="sequence conflict" description="In Ref. 2; AAH85756." evidence="10" ref="2">
    <original>CP</original>
    <variation>VSQ</variation>
    <location>
        <begin position="583"/>
        <end position="584"/>
    </location>
</feature>
<comment type="function">
    <text evidence="2 3 4">Cell surface proteoglycan (By similarity). Negatively regulates the hedgehog signaling pathway when attached via the GPI-anchor to the cell surface by competing with the hedgehog receptor PTC1 for binding to hedgehog proteins (By similarity). Binding to the hedgehog protein SHH triggers internalization of the complex by endocytosis and its subsequent lysosomal degradation (By similarity). Positively regulates the canonical Wnt signaling pathway by binding to the Wnt receptor Frizzled and stimulating the binding of the Frizzled receptor to Wnt ligands (By similarity). Positively regulates the non-canonical Wnt signaling pathway (By similarity). Binds to CD81 which decreases the availability of free CD81 for binding to the transcriptional repressor HHEX, resulting in nuclear translocation of HHEX and transcriptional repression (By similarity). Inhibits the dipeptidyl peptidase activity of DPP4 (By similarity). Plays a role in limb patterning and skeletal development by controlling the cellular response to BMP4 (By similarity). Modulates the effects of growth factors BMP2, BMP7 and FGF7 on renal branching morphogenesis (By similarity). Required for coronary vascular development (By similarity). Plays a role in regulating cell movements during gastrulation (By similarity).</text>
</comment>
<comment type="subunit">
    <text evidence="2 4 9">Heterodimer; disulfide-linked (By similarity). Cleavage by a furin-like convertase results in production of alpha and beta chains which form a disulfide-linked heterodimer (By similarity). Interacts with DPP4 (By similarity). Interacts with FGF2 (PubMed:9065409). Interacts with WNT5A (By similarity). Also interacts with WNT3A and WNT7B (By similarity). Interacts with hedgehog protein SHH; the heparan sulfate chains are not required for the interaction (By similarity). Also interacts with hedgehog protein IHH (By similarity). Interacts with CD81 (By similarity). Interacts with Wnt receptors FZD4, FZD7 and FZD8; the heparan sulfate chains are required for the interaction (By similarity).</text>
</comment>
<comment type="subcellular location">
    <subcellularLocation>
        <location evidence="8">Cell membrane</location>
        <topology evidence="8">Lipid-anchor</topology>
        <topology evidence="8">GPI-anchor</topology>
        <orientation evidence="8">Extracellular side</orientation>
    </subcellularLocation>
</comment>
<comment type="developmental stage">
    <text evidence="7">In the intestine, expression decreases gradually from 20 dpc and finally becomes undetectable after weaning around 24 days after birth.</text>
</comment>
<comment type="PTM">
    <text evidence="2">O-glycosylated; contains heparan sulfate and/or chondroitin sulfate.</text>
</comment>
<comment type="PTM">
    <text evidence="2">Cleaved intracellularly by a furin-like convertase to generate 2 subunits, alpha and beta, which remain associated through disulfide bonds and are associated with the cell surface via the GPI-anchor. This processing is essential for its role in inhibition of hedgehog signaling. A second proteolytic event may result in cleavage of the protein on the cell surface, separating it from the GPI-anchor and leading to its shedding from the cell surface.</text>
</comment>
<comment type="similarity">
    <text evidence="10">Belongs to the glypican family.</text>
</comment>
<accession>P13265</accession>
<accession>Q5U326</accession>
<reference key="1">
    <citation type="journal article" date="1988" name="Mol. Cell. Biol.">
        <title>Isolation of a cDNA corresponding to a developmentally regulated transcript in rat intestine.</title>
        <authorList>
            <person name="Filmus J."/>
            <person name="Church J.G."/>
            <person name="Buick R.N."/>
        </authorList>
    </citation>
    <scope>NUCLEOTIDE SEQUENCE [MRNA]</scope>
    <scope>DEVELOPMENTAL STAGE</scope>
</reference>
<reference key="2">
    <citation type="journal article" date="2004" name="Genome Res.">
        <title>The status, quality, and expansion of the NIH full-length cDNA project: the Mammalian Gene Collection (MGC).</title>
        <authorList>
            <consortium name="The MGC Project Team"/>
        </authorList>
    </citation>
    <scope>NUCLEOTIDE SEQUENCE [LARGE SCALE MRNA]</scope>
    <source>
        <tissue>Lung</tissue>
    </source>
</reference>
<reference key="3">
    <citation type="journal article" date="1995" name="Biochem. J.">
        <title>Identification of a new membrane-bound heparan sulphate proteoglycan.</title>
        <authorList>
            <person name="Filmus J."/>
            <person name="Shi W."/>
            <person name="Wong Z.M."/>
            <person name="Wong M.J."/>
        </authorList>
    </citation>
    <scope>SUBCELLULAR LOCATION</scope>
</reference>
<reference key="4">
    <citation type="journal article" date="1997" name="J. Biol. Chem.">
        <title>OCI-5/rat glypican-3 binds to fibroblast growth factor-2 but not to insulin-like growth factor-2.</title>
        <authorList>
            <person name="Song H.H."/>
            <person name="Shi W."/>
            <person name="Filmus J."/>
        </authorList>
    </citation>
    <scope>INTERACTION WITH FGF2</scope>
</reference>